<reference key="1">
    <citation type="journal article" date="2005" name="Proc. Natl. Acad. Sci. U.S.A.">
        <title>Genome analysis of multiple pathogenic isolates of Streptococcus agalactiae: implications for the microbial 'pan-genome'.</title>
        <authorList>
            <person name="Tettelin H."/>
            <person name="Masignani V."/>
            <person name="Cieslewicz M.J."/>
            <person name="Donati C."/>
            <person name="Medini D."/>
            <person name="Ward N.L."/>
            <person name="Angiuoli S.V."/>
            <person name="Crabtree J."/>
            <person name="Jones A.L."/>
            <person name="Durkin A.S."/>
            <person name="DeBoy R.T."/>
            <person name="Davidsen T.M."/>
            <person name="Mora M."/>
            <person name="Scarselli M."/>
            <person name="Margarit y Ros I."/>
            <person name="Peterson J.D."/>
            <person name="Hauser C.R."/>
            <person name="Sundaram J.P."/>
            <person name="Nelson W.C."/>
            <person name="Madupu R."/>
            <person name="Brinkac L.M."/>
            <person name="Dodson R.J."/>
            <person name="Rosovitz M.J."/>
            <person name="Sullivan S.A."/>
            <person name="Daugherty S.C."/>
            <person name="Haft D.H."/>
            <person name="Selengut J."/>
            <person name="Gwinn M.L."/>
            <person name="Zhou L."/>
            <person name="Zafar N."/>
            <person name="Khouri H."/>
            <person name="Radune D."/>
            <person name="Dimitrov G."/>
            <person name="Watkins K."/>
            <person name="O'Connor K.J."/>
            <person name="Smith S."/>
            <person name="Utterback T.R."/>
            <person name="White O."/>
            <person name="Rubens C.E."/>
            <person name="Grandi G."/>
            <person name="Madoff L.C."/>
            <person name="Kasper D.L."/>
            <person name="Telford J.L."/>
            <person name="Wessels M.R."/>
            <person name="Rappuoli R."/>
            <person name="Fraser C.M."/>
        </authorList>
    </citation>
    <scope>NUCLEOTIDE SEQUENCE [LARGE SCALE GENOMIC DNA]</scope>
    <source>
        <strain>ATCC 27591 / A909 / CDC SS700</strain>
    </source>
</reference>
<protein>
    <recommendedName>
        <fullName evidence="1">UPF0291 protein SAK_0343</fullName>
    </recommendedName>
</protein>
<dbReference type="EMBL" id="CP000114">
    <property type="protein sequence ID" value="ABA45594.1"/>
    <property type="molecule type" value="Genomic_DNA"/>
</dbReference>
<dbReference type="RefSeq" id="WP_000371297.1">
    <property type="nucleotide sequence ID" value="NC_007432.1"/>
</dbReference>
<dbReference type="SMR" id="Q3K3A8"/>
<dbReference type="KEGG" id="sak:SAK_0343"/>
<dbReference type="HOGENOM" id="CLU_173137_0_2_9"/>
<dbReference type="GO" id="GO:0005737">
    <property type="term" value="C:cytoplasm"/>
    <property type="evidence" value="ECO:0007669"/>
    <property type="project" value="UniProtKB-SubCell"/>
</dbReference>
<dbReference type="Gene3D" id="1.10.287.540">
    <property type="entry name" value="Helix hairpin bin"/>
    <property type="match status" value="1"/>
</dbReference>
<dbReference type="HAMAP" id="MF_01103">
    <property type="entry name" value="UPF0291"/>
    <property type="match status" value="1"/>
</dbReference>
<dbReference type="InterPro" id="IPR009242">
    <property type="entry name" value="DUF896"/>
</dbReference>
<dbReference type="NCBIfam" id="NF002711">
    <property type="entry name" value="PRK02539.1"/>
    <property type="match status" value="1"/>
</dbReference>
<dbReference type="PANTHER" id="PTHR37300">
    <property type="entry name" value="UPF0291 PROTEIN CBO2609/CLC_2481"/>
    <property type="match status" value="1"/>
</dbReference>
<dbReference type="PANTHER" id="PTHR37300:SF1">
    <property type="entry name" value="UPF0291 PROTEIN YNZC"/>
    <property type="match status" value="1"/>
</dbReference>
<dbReference type="Pfam" id="PF05979">
    <property type="entry name" value="DUF896"/>
    <property type="match status" value="1"/>
</dbReference>
<dbReference type="SUPFAM" id="SSF158221">
    <property type="entry name" value="YnzC-like"/>
    <property type="match status" value="1"/>
</dbReference>
<proteinExistence type="inferred from homology"/>
<sequence length="85" mass="9791">MDPKKIARINELSKKKKTVGLTGEEKVEQAKLREEYIEGFRRSVRHHVEGIKLVDDEGNDVTPEKLRQVQREKGLHGRSLDDPNS</sequence>
<evidence type="ECO:0000255" key="1">
    <source>
        <dbReference type="HAMAP-Rule" id="MF_01103"/>
    </source>
</evidence>
<evidence type="ECO:0000256" key="2">
    <source>
        <dbReference type="SAM" id="MobiDB-lite"/>
    </source>
</evidence>
<comment type="subcellular location">
    <subcellularLocation>
        <location evidence="1">Cytoplasm</location>
    </subcellularLocation>
</comment>
<comment type="similarity">
    <text evidence="1">Belongs to the UPF0291 family.</text>
</comment>
<accession>Q3K3A8</accession>
<feature type="chain" id="PRO_1000065028" description="UPF0291 protein SAK_0343">
    <location>
        <begin position="1"/>
        <end position="85"/>
    </location>
</feature>
<feature type="region of interest" description="Disordered" evidence="2">
    <location>
        <begin position="58"/>
        <end position="85"/>
    </location>
</feature>
<feature type="compositionally biased region" description="Basic and acidic residues" evidence="2">
    <location>
        <begin position="62"/>
        <end position="85"/>
    </location>
</feature>
<gene>
    <name type="ordered locus">SAK_0343</name>
</gene>
<keyword id="KW-0963">Cytoplasm</keyword>
<organism>
    <name type="scientific">Streptococcus agalactiae serotype Ia (strain ATCC 27591 / A909 / CDC SS700)</name>
    <dbReference type="NCBI Taxonomy" id="205921"/>
    <lineage>
        <taxon>Bacteria</taxon>
        <taxon>Bacillati</taxon>
        <taxon>Bacillota</taxon>
        <taxon>Bacilli</taxon>
        <taxon>Lactobacillales</taxon>
        <taxon>Streptococcaceae</taxon>
        <taxon>Streptococcus</taxon>
    </lineage>
</organism>
<name>Y343_STRA1</name>